<evidence type="ECO:0000250" key="1"/>
<evidence type="ECO:0000305" key="2"/>
<sequence length="270" mass="29062">MTTTHPSGFAPAASPLAPTMIHTPDGAISAGITSIPSQGDDMPAYYARPKASDGALPVVIVVQEIFGVHEHIRDICRRLALEGYLAIAPELYFREGDPNDFADIPTLLSGLVAKVPDSQVLADLDHVASWASRNGGDAHRLMITGFCWGGRITWLYAAHNPQLKAAVAWYGKLVGDTSLNSPKHPVDIATDLNAPVLGLYGGQDTSIPQESVETMRQALRAANAKAEIVVYPDAGHAFNADYRPGYHEASAKDGWQRMLEWFAQYGGKKG</sequence>
<dbReference type="EC" id="3.1.1.45"/>
<dbReference type="EMBL" id="AF233324">
    <property type="protein sequence ID" value="AAF33425.1"/>
    <property type="molecule type" value="Genomic_DNA"/>
</dbReference>
<dbReference type="EMBL" id="AE006468">
    <property type="protein sequence ID" value="AAL22811.1"/>
    <property type="molecule type" value="Genomic_DNA"/>
</dbReference>
<dbReference type="RefSeq" id="WP_000213959.1">
    <property type="nucleotide sequence ID" value="NC_003197.2"/>
</dbReference>
<dbReference type="SMR" id="Q9L6M9"/>
<dbReference type="STRING" id="99287.STM3967"/>
<dbReference type="ESTHER" id="salty-DLHH">
    <property type="family name" value="Dienelactone_hydrolase"/>
</dbReference>
<dbReference type="PaxDb" id="99287-STM3967"/>
<dbReference type="KEGG" id="stm:STM3967"/>
<dbReference type="PATRIC" id="fig|99287.12.peg.4186"/>
<dbReference type="HOGENOM" id="CLU_054590_7_0_6"/>
<dbReference type="OMA" id="QCGAKHI"/>
<dbReference type="PhylomeDB" id="Q9L6M9"/>
<dbReference type="BioCyc" id="SENT99287:STM3967-MONOMER"/>
<dbReference type="Proteomes" id="UP000001014">
    <property type="component" value="Chromosome"/>
</dbReference>
<dbReference type="GO" id="GO:0008806">
    <property type="term" value="F:carboxymethylenebutenolidase activity"/>
    <property type="evidence" value="ECO:0007669"/>
    <property type="project" value="UniProtKB-EC"/>
</dbReference>
<dbReference type="Gene3D" id="3.40.50.1820">
    <property type="entry name" value="alpha/beta hydrolase"/>
    <property type="match status" value="1"/>
</dbReference>
<dbReference type="InterPro" id="IPR029058">
    <property type="entry name" value="AB_hydrolase_fold"/>
</dbReference>
<dbReference type="InterPro" id="IPR002925">
    <property type="entry name" value="Dienelactn_hydro"/>
</dbReference>
<dbReference type="InterPro" id="IPR051049">
    <property type="entry name" value="Dienelactone_hydrolase-like"/>
</dbReference>
<dbReference type="PANTHER" id="PTHR46623:SF6">
    <property type="entry name" value="ALPHA_BETA-HYDROLASES SUPERFAMILY PROTEIN"/>
    <property type="match status" value="1"/>
</dbReference>
<dbReference type="PANTHER" id="PTHR46623">
    <property type="entry name" value="CARBOXYMETHYLENEBUTENOLIDASE-RELATED"/>
    <property type="match status" value="1"/>
</dbReference>
<dbReference type="Pfam" id="PF01738">
    <property type="entry name" value="DLH"/>
    <property type="match status" value="1"/>
</dbReference>
<dbReference type="SUPFAM" id="SSF53474">
    <property type="entry name" value="alpha/beta-Hydrolases"/>
    <property type="match status" value="1"/>
</dbReference>
<keyword id="KW-0378">Hydrolase</keyword>
<keyword id="KW-1185">Reference proteome</keyword>
<reference key="1">
    <citation type="journal article" date="2001" name="Nature">
        <title>Complete genome sequence of Salmonella enterica serovar Typhimurium LT2.</title>
        <authorList>
            <person name="McClelland M."/>
            <person name="Sanderson K.E."/>
            <person name="Spieth J."/>
            <person name="Clifton S.W."/>
            <person name="Latreille P."/>
            <person name="Courtney L."/>
            <person name="Porwollik S."/>
            <person name="Ali J."/>
            <person name="Dante M."/>
            <person name="Du F."/>
            <person name="Hou S."/>
            <person name="Layman D."/>
            <person name="Leonard S."/>
            <person name="Nguyen C."/>
            <person name="Scott K."/>
            <person name="Holmes A."/>
            <person name="Grewal N."/>
            <person name="Mulvaney E."/>
            <person name="Ryan E."/>
            <person name="Sun H."/>
            <person name="Florea L."/>
            <person name="Miller W."/>
            <person name="Stoneking T."/>
            <person name="Nhan M."/>
            <person name="Waterston R."/>
            <person name="Wilson R.K."/>
        </authorList>
    </citation>
    <scope>NUCLEOTIDE SEQUENCE [LARGE SCALE GENOMIC DNA]</scope>
    <source>
        <strain>LT2 / SGSC1412 / ATCC 700720</strain>
    </source>
</reference>
<organism>
    <name type="scientific">Salmonella typhimurium (strain LT2 / SGSC1412 / ATCC 700720)</name>
    <dbReference type="NCBI Taxonomy" id="99287"/>
    <lineage>
        <taxon>Bacteria</taxon>
        <taxon>Pseudomonadati</taxon>
        <taxon>Pseudomonadota</taxon>
        <taxon>Gammaproteobacteria</taxon>
        <taxon>Enterobacterales</taxon>
        <taxon>Enterobacteriaceae</taxon>
        <taxon>Salmonella</taxon>
    </lineage>
</organism>
<accession>Q9L6M9</accession>
<feature type="chain" id="PRO_0000161581" description="Putative carboxymethylenebutenolidase">
    <location>
        <begin position="1"/>
        <end position="270"/>
    </location>
</feature>
<feature type="active site" evidence="1">
    <location>
        <position position="147"/>
    </location>
</feature>
<feature type="active site" evidence="1">
    <location>
        <position position="204"/>
    </location>
</feature>
<feature type="active site" evidence="1">
    <location>
        <position position="236"/>
    </location>
</feature>
<comment type="catalytic activity">
    <reaction>
        <text>2-(5-oxo-2,5-dihydrofuran-2-ylidene)acetate + H2O = 4-oxohex-2-enedioate + H(+)</text>
        <dbReference type="Rhea" id="RHEA:12372"/>
        <dbReference type="ChEBI" id="CHEBI:12040"/>
        <dbReference type="ChEBI" id="CHEBI:15377"/>
        <dbReference type="ChEBI" id="CHEBI:15378"/>
        <dbReference type="ChEBI" id="CHEBI:57263"/>
        <dbReference type="EC" id="3.1.1.45"/>
    </reaction>
</comment>
<comment type="similarity">
    <text evidence="2">Belongs to the dienelactone hydrolase family.</text>
</comment>
<gene>
    <name type="primary">ysgA</name>
    <name type="ordered locus">STM3967</name>
    <name type="ORF">STMD1.22</name>
</gene>
<name>DLHH_SALTY</name>
<proteinExistence type="inferred from homology"/>
<protein>
    <recommendedName>
        <fullName>Putative carboxymethylenebutenolidase</fullName>
        <ecNumber>3.1.1.45</ecNumber>
    </recommendedName>
    <alternativeName>
        <fullName>Dienelactone hydrolase</fullName>
        <shortName>DLH</shortName>
    </alternativeName>
</protein>